<reference key="1">
    <citation type="journal article" date="2002" name="J. Bacteriol.">
        <title>Whole-genome comparison of Mycobacterium tuberculosis clinical and laboratory strains.</title>
        <authorList>
            <person name="Fleischmann R.D."/>
            <person name="Alland D."/>
            <person name="Eisen J.A."/>
            <person name="Carpenter L."/>
            <person name="White O."/>
            <person name="Peterson J.D."/>
            <person name="DeBoy R.T."/>
            <person name="Dodson R.J."/>
            <person name="Gwinn M.L."/>
            <person name="Haft D.H."/>
            <person name="Hickey E.K."/>
            <person name="Kolonay J.F."/>
            <person name="Nelson W.C."/>
            <person name="Umayam L.A."/>
            <person name="Ermolaeva M.D."/>
            <person name="Salzberg S.L."/>
            <person name="Delcher A."/>
            <person name="Utterback T.R."/>
            <person name="Weidman J.F."/>
            <person name="Khouri H.M."/>
            <person name="Gill J."/>
            <person name="Mikula A."/>
            <person name="Bishai W."/>
            <person name="Jacobs W.R. Jr."/>
            <person name="Venter J.C."/>
            <person name="Fraser C.M."/>
        </authorList>
    </citation>
    <scope>NUCLEOTIDE SEQUENCE [LARGE SCALE GENOMIC DNA]</scope>
    <source>
        <strain>CDC 1551 / Oshkosh</strain>
    </source>
</reference>
<feature type="chain" id="PRO_0000427689" description="Putative diacyglycerol O-acyltransferase MT0919">
    <location>
        <begin position="1"/>
        <end position="505"/>
    </location>
</feature>
<feature type="active site" description="Proton acceptor" evidence="2">
    <location>
        <position position="167"/>
    </location>
</feature>
<keyword id="KW-0012">Acyltransferase</keyword>
<keyword id="KW-0319">Glycerol metabolism</keyword>
<keyword id="KW-0444">Lipid biosynthesis</keyword>
<keyword id="KW-0443">Lipid metabolism</keyword>
<keyword id="KW-1185">Reference proteome</keyword>
<keyword id="KW-0808">Transferase</keyword>
<evidence type="ECO:0000250" key="1">
    <source>
        <dbReference type="UniProtKB" id="P9WKC9"/>
    </source>
</evidence>
<evidence type="ECO:0000255" key="2"/>
<evidence type="ECO:0000305" key="3"/>
<sequence>MRQQQEADVVALGRKPGLLCVPERFRAMDLPMAAADALFLWAETPTRPLHVGALAVLSQPDNGTGRYLRKVFSAAVARQQVAPWWRRRPHRSLTSLGQWSWRTETEVDLDYHVRLSALPPRAGTAELWALVSELHAGMLDRSRPLWQVDLIEGLPGGRCAVYVKVHHALADGVSVMRLLQRIVTADPHQRQMPTLWEVPAQASVAKHTAPRGSSRPLTLAKGVLGQARGVPGMVRVVADTTWRAAQCRSGPLTLAAPHTPLNEPIAGARSVAGCSFPIERLRQVAEHADATINDVVLAMCGGALRAYLISRGALPGAPLIAMVPVSLRDTAVIDVFGQGPGNKIGTLMCSLATHLASPVERLSAIRASMRDGKAAIAGRSRNQALAMSALGAAPLALAMALGRVPAPLRPPNVTISNVPGPQGALYWNGARLDALYLLSAPVDGAALNITCSGTNEQITFGLTGCRRAVPALSILTDQLAHELELLVGVSEAGPGTRLRRIAGRR</sequence>
<accession>P9WKA2</accession>
<accession>L0T7U3</accession>
<accession>P67204</accession>
<accession>Q10554</accession>
<proteinExistence type="inferred from homology"/>
<dbReference type="EC" id="2.3.1.20" evidence="1"/>
<dbReference type="EMBL" id="AE000516">
    <property type="protein sequence ID" value="AAK45165.1"/>
    <property type="status" value="ALT_INIT"/>
    <property type="molecule type" value="Genomic_DNA"/>
</dbReference>
<dbReference type="PIR" id="D70782">
    <property type="entry name" value="D70782"/>
</dbReference>
<dbReference type="SMR" id="P9WKA2"/>
<dbReference type="KEGG" id="mtc:MT0919"/>
<dbReference type="PATRIC" id="fig|83331.31.peg.987"/>
<dbReference type="HOGENOM" id="CLU_024186_4_1_11"/>
<dbReference type="UniPathway" id="UPA00282"/>
<dbReference type="Proteomes" id="UP000001020">
    <property type="component" value="Chromosome"/>
</dbReference>
<dbReference type="GO" id="GO:0005886">
    <property type="term" value="C:plasma membrane"/>
    <property type="evidence" value="ECO:0007669"/>
    <property type="project" value="TreeGrafter"/>
</dbReference>
<dbReference type="GO" id="GO:0004144">
    <property type="term" value="F:diacylglycerol O-acyltransferase activity"/>
    <property type="evidence" value="ECO:0007669"/>
    <property type="project" value="UniProtKB-EC"/>
</dbReference>
<dbReference type="GO" id="GO:0051701">
    <property type="term" value="P:biological process involved in interaction with host"/>
    <property type="evidence" value="ECO:0007669"/>
    <property type="project" value="TreeGrafter"/>
</dbReference>
<dbReference type="GO" id="GO:0006071">
    <property type="term" value="P:glycerol metabolic process"/>
    <property type="evidence" value="ECO:0007669"/>
    <property type="project" value="UniProtKB-KW"/>
</dbReference>
<dbReference type="GO" id="GO:0001666">
    <property type="term" value="P:response to hypoxia"/>
    <property type="evidence" value="ECO:0007669"/>
    <property type="project" value="TreeGrafter"/>
</dbReference>
<dbReference type="GO" id="GO:0071731">
    <property type="term" value="P:response to nitric oxide"/>
    <property type="evidence" value="ECO:0007669"/>
    <property type="project" value="TreeGrafter"/>
</dbReference>
<dbReference type="GO" id="GO:0019432">
    <property type="term" value="P:triglyceride biosynthetic process"/>
    <property type="evidence" value="ECO:0007669"/>
    <property type="project" value="UniProtKB-UniPathway"/>
</dbReference>
<dbReference type="Gene3D" id="3.30.559.10">
    <property type="entry name" value="Chloramphenicol acetyltransferase-like domain"/>
    <property type="match status" value="1"/>
</dbReference>
<dbReference type="InterPro" id="IPR014292">
    <property type="entry name" value="Acyl_transf_WS/DGAT"/>
</dbReference>
<dbReference type="InterPro" id="IPR023213">
    <property type="entry name" value="CAT-like_dom_sf"/>
</dbReference>
<dbReference type="InterPro" id="IPR045034">
    <property type="entry name" value="O-acyltransferase_WSD1-like"/>
</dbReference>
<dbReference type="InterPro" id="IPR009721">
    <property type="entry name" value="O-acyltransferase_WSD1_C"/>
</dbReference>
<dbReference type="InterPro" id="IPR004255">
    <property type="entry name" value="O-acyltransferase_WSD1_N"/>
</dbReference>
<dbReference type="NCBIfam" id="TIGR02946">
    <property type="entry name" value="acyl_WS_DGAT"/>
    <property type="match status" value="1"/>
</dbReference>
<dbReference type="PANTHER" id="PTHR31650">
    <property type="entry name" value="O-ACYLTRANSFERASE (WSD1-LIKE) FAMILY PROTEIN"/>
    <property type="match status" value="1"/>
</dbReference>
<dbReference type="PANTHER" id="PTHR31650:SF1">
    <property type="entry name" value="WAX ESTER SYNTHASE_DIACYLGLYCEROL ACYLTRANSFERASE 4-RELATED"/>
    <property type="match status" value="1"/>
</dbReference>
<dbReference type="Pfam" id="PF06974">
    <property type="entry name" value="WS_DGAT_C"/>
    <property type="match status" value="1"/>
</dbReference>
<dbReference type="Pfam" id="PF03007">
    <property type="entry name" value="WS_DGAT_cat"/>
    <property type="match status" value="1"/>
</dbReference>
<dbReference type="SUPFAM" id="SSF52777">
    <property type="entry name" value="CoA-dependent acyltransferases"/>
    <property type="match status" value="2"/>
</dbReference>
<comment type="catalytic activity">
    <reaction evidence="1">
        <text>an acyl-CoA + a 1,2-diacyl-sn-glycerol = a triacyl-sn-glycerol + CoA</text>
        <dbReference type="Rhea" id="RHEA:10868"/>
        <dbReference type="ChEBI" id="CHEBI:17815"/>
        <dbReference type="ChEBI" id="CHEBI:57287"/>
        <dbReference type="ChEBI" id="CHEBI:58342"/>
        <dbReference type="ChEBI" id="CHEBI:64615"/>
        <dbReference type="EC" id="2.3.1.20"/>
    </reaction>
</comment>
<comment type="pathway">
    <text>Glycerolipid metabolism; triacylglycerol biosynthesis.</text>
</comment>
<comment type="similarity">
    <text evidence="3">Belongs to the long-chain O-acyltransferase family.</text>
</comment>
<comment type="sequence caution" evidence="3">
    <conflict type="erroneous initiation">
        <sequence resource="EMBL-CDS" id="AAK45165"/>
    </conflict>
    <text>Extended N-terminus.</text>
</comment>
<name>Y895_MYCTO</name>
<gene>
    <name type="ordered locus">MT0919</name>
</gene>
<organism>
    <name type="scientific">Mycobacterium tuberculosis (strain CDC 1551 / Oshkosh)</name>
    <dbReference type="NCBI Taxonomy" id="83331"/>
    <lineage>
        <taxon>Bacteria</taxon>
        <taxon>Bacillati</taxon>
        <taxon>Actinomycetota</taxon>
        <taxon>Actinomycetes</taxon>
        <taxon>Mycobacteriales</taxon>
        <taxon>Mycobacteriaceae</taxon>
        <taxon>Mycobacterium</taxon>
        <taxon>Mycobacterium tuberculosis complex</taxon>
    </lineage>
</organism>
<protein>
    <recommendedName>
        <fullName>Putative diacyglycerol O-acyltransferase MT0919</fullName>
        <ecNumber evidence="1">2.3.1.20</ecNumber>
    </recommendedName>
    <alternativeName>
        <fullName>Putative triacylglycerol synthase MT0919</fullName>
    </alternativeName>
</protein>